<dbReference type="EC" id="2.1.2.11" evidence="1"/>
<dbReference type="EMBL" id="CP001598">
    <property type="protein sequence ID" value="ACQ46855.1"/>
    <property type="molecule type" value="Genomic_DNA"/>
</dbReference>
<dbReference type="RefSeq" id="WP_000851103.1">
    <property type="nucleotide sequence ID" value="NC_012659.1"/>
</dbReference>
<dbReference type="SMR" id="C3P5Q9"/>
<dbReference type="GeneID" id="45021534"/>
<dbReference type="KEGG" id="bai:BAA_1629"/>
<dbReference type="HOGENOM" id="CLU_036645_1_0_9"/>
<dbReference type="UniPathway" id="UPA00028">
    <property type="reaction ID" value="UER00003"/>
</dbReference>
<dbReference type="GO" id="GO:0005737">
    <property type="term" value="C:cytoplasm"/>
    <property type="evidence" value="ECO:0007669"/>
    <property type="project" value="UniProtKB-SubCell"/>
</dbReference>
<dbReference type="GO" id="GO:0003864">
    <property type="term" value="F:3-methyl-2-oxobutanoate hydroxymethyltransferase activity"/>
    <property type="evidence" value="ECO:0007669"/>
    <property type="project" value="UniProtKB-UniRule"/>
</dbReference>
<dbReference type="GO" id="GO:0000287">
    <property type="term" value="F:magnesium ion binding"/>
    <property type="evidence" value="ECO:0007669"/>
    <property type="project" value="TreeGrafter"/>
</dbReference>
<dbReference type="GO" id="GO:0015940">
    <property type="term" value="P:pantothenate biosynthetic process"/>
    <property type="evidence" value="ECO:0007669"/>
    <property type="project" value="UniProtKB-UniRule"/>
</dbReference>
<dbReference type="CDD" id="cd06557">
    <property type="entry name" value="KPHMT-like"/>
    <property type="match status" value="1"/>
</dbReference>
<dbReference type="FunFam" id="3.20.20.60:FF:000003">
    <property type="entry name" value="3-methyl-2-oxobutanoate hydroxymethyltransferase"/>
    <property type="match status" value="1"/>
</dbReference>
<dbReference type="Gene3D" id="3.20.20.60">
    <property type="entry name" value="Phosphoenolpyruvate-binding domains"/>
    <property type="match status" value="1"/>
</dbReference>
<dbReference type="HAMAP" id="MF_00156">
    <property type="entry name" value="PanB"/>
    <property type="match status" value="1"/>
</dbReference>
<dbReference type="InterPro" id="IPR003700">
    <property type="entry name" value="Pantoate_hydroxy_MeTrfase"/>
</dbReference>
<dbReference type="InterPro" id="IPR015813">
    <property type="entry name" value="Pyrv/PenolPyrv_kinase-like_dom"/>
</dbReference>
<dbReference type="InterPro" id="IPR040442">
    <property type="entry name" value="Pyrv_kinase-like_dom_sf"/>
</dbReference>
<dbReference type="NCBIfam" id="TIGR00222">
    <property type="entry name" value="panB"/>
    <property type="match status" value="1"/>
</dbReference>
<dbReference type="NCBIfam" id="NF001452">
    <property type="entry name" value="PRK00311.1"/>
    <property type="match status" value="1"/>
</dbReference>
<dbReference type="PANTHER" id="PTHR20881">
    <property type="entry name" value="3-METHYL-2-OXOBUTANOATE HYDROXYMETHYLTRANSFERASE"/>
    <property type="match status" value="1"/>
</dbReference>
<dbReference type="PANTHER" id="PTHR20881:SF0">
    <property type="entry name" value="3-METHYL-2-OXOBUTANOATE HYDROXYMETHYLTRANSFERASE"/>
    <property type="match status" value="1"/>
</dbReference>
<dbReference type="Pfam" id="PF02548">
    <property type="entry name" value="Pantoate_transf"/>
    <property type="match status" value="1"/>
</dbReference>
<dbReference type="PIRSF" id="PIRSF000388">
    <property type="entry name" value="Pantoate_hydroxy_MeTrfase"/>
    <property type="match status" value="1"/>
</dbReference>
<dbReference type="SUPFAM" id="SSF51621">
    <property type="entry name" value="Phosphoenolpyruvate/pyruvate domain"/>
    <property type="match status" value="1"/>
</dbReference>
<gene>
    <name evidence="1" type="primary">panB</name>
    <name type="ordered locus">BAA_1629</name>
</gene>
<keyword id="KW-0963">Cytoplasm</keyword>
<keyword id="KW-0460">Magnesium</keyword>
<keyword id="KW-0479">Metal-binding</keyword>
<keyword id="KW-0566">Pantothenate biosynthesis</keyword>
<keyword id="KW-0808">Transferase</keyword>
<feature type="chain" id="PRO_1000123368" description="3-methyl-2-oxobutanoate hydroxymethyltransferase">
    <location>
        <begin position="1"/>
        <end position="279"/>
    </location>
</feature>
<feature type="active site" description="Proton acceptor" evidence="1">
    <location>
        <position position="181"/>
    </location>
</feature>
<feature type="binding site" evidence="1">
    <location>
        <begin position="43"/>
        <end position="44"/>
    </location>
    <ligand>
        <name>3-methyl-2-oxobutanoate</name>
        <dbReference type="ChEBI" id="CHEBI:11851"/>
    </ligand>
</feature>
<feature type="binding site" evidence="1">
    <location>
        <position position="43"/>
    </location>
    <ligand>
        <name>Mg(2+)</name>
        <dbReference type="ChEBI" id="CHEBI:18420"/>
    </ligand>
</feature>
<feature type="binding site" evidence="1">
    <location>
        <position position="82"/>
    </location>
    <ligand>
        <name>3-methyl-2-oxobutanoate</name>
        <dbReference type="ChEBI" id="CHEBI:11851"/>
    </ligand>
</feature>
<feature type="binding site" evidence="1">
    <location>
        <position position="82"/>
    </location>
    <ligand>
        <name>Mg(2+)</name>
        <dbReference type="ChEBI" id="CHEBI:18420"/>
    </ligand>
</feature>
<feature type="binding site" evidence="1">
    <location>
        <position position="112"/>
    </location>
    <ligand>
        <name>3-methyl-2-oxobutanoate</name>
        <dbReference type="ChEBI" id="CHEBI:11851"/>
    </ligand>
</feature>
<feature type="binding site" evidence="1">
    <location>
        <position position="114"/>
    </location>
    <ligand>
        <name>Mg(2+)</name>
        <dbReference type="ChEBI" id="CHEBI:18420"/>
    </ligand>
</feature>
<reference key="1">
    <citation type="submission" date="2009-04" db="EMBL/GenBank/DDBJ databases">
        <title>Genome sequence of Bacillus anthracis A0248.</title>
        <authorList>
            <person name="Dodson R.J."/>
            <person name="Munk A.C."/>
            <person name="Bruce D."/>
            <person name="Detter C."/>
            <person name="Tapia R."/>
            <person name="Sutton G."/>
            <person name="Sims D."/>
            <person name="Brettin T."/>
        </authorList>
    </citation>
    <scope>NUCLEOTIDE SEQUENCE [LARGE SCALE GENOMIC DNA]</scope>
    <source>
        <strain>A0248</strain>
    </source>
</reference>
<comment type="function">
    <text evidence="1">Catalyzes the reversible reaction in which hydroxymethyl group from 5,10-methylenetetrahydrofolate is transferred onto alpha-ketoisovalerate to form ketopantoate.</text>
</comment>
<comment type="catalytic activity">
    <reaction evidence="1">
        <text>3-methyl-2-oxobutanoate + (6R)-5,10-methylene-5,6,7,8-tetrahydrofolate + H2O = 2-dehydropantoate + (6S)-5,6,7,8-tetrahydrofolate</text>
        <dbReference type="Rhea" id="RHEA:11824"/>
        <dbReference type="ChEBI" id="CHEBI:11561"/>
        <dbReference type="ChEBI" id="CHEBI:11851"/>
        <dbReference type="ChEBI" id="CHEBI:15377"/>
        <dbReference type="ChEBI" id="CHEBI:15636"/>
        <dbReference type="ChEBI" id="CHEBI:57453"/>
        <dbReference type="EC" id="2.1.2.11"/>
    </reaction>
</comment>
<comment type="cofactor">
    <cofactor evidence="1">
        <name>Mg(2+)</name>
        <dbReference type="ChEBI" id="CHEBI:18420"/>
    </cofactor>
    <text evidence="1">Binds 1 Mg(2+) ion per subunit.</text>
</comment>
<comment type="pathway">
    <text evidence="1">Cofactor biosynthesis; (R)-pantothenate biosynthesis; (R)-pantoate from 3-methyl-2-oxobutanoate: step 1/2.</text>
</comment>
<comment type="subunit">
    <text evidence="1">Homodecamer; pentamer of dimers.</text>
</comment>
<comment type="subcellular location">
    <subcellularLocation>
        <location evidence="1">Cytoplasm</location>
    </subcellularLocation>
</comment>
<comment type="similarity">
    <text evidence="1">Belongs to the PanB family.</text>
</comment>
<proteinExistence type="inferred from homology"/>
<accession>C3P5Q9</accession>
<organism>
    <name type="scientific">Bacillus anthracis (strain A0248)</name>
    <dbReference type="NCBI Taxonomy" id="592021"/>
    <lineage>
        <taxon>Bacteria</taxon>
        <taxon>Bacillati</taxon>
        <taxon>Bacillota</taxon>
        <taxon>Bacilli</taxon>
        <taxon>Bacillales</taxon>
        <taxon>Bacillaceae</taxon>
        <taxon>Bacillus</taxon>
        <taxon>Bacillus cereus group</taxon>
    </lineage>
</organism>
<sequence length="279" mass="30535">MKTKTDFLKMKEQGEPITMLTAYDYPSAKLAEEAEVDMILVGDSLGMVVLGYDSTVPVTVEDMIHHTKAVRRGAKETFIVTDMPFMSYHVSLQDTMVNARRIVQESGAHALKVEGAGEVISTIHYLTNAGIPVVAHLGLTPQSVGVLGGYKVQGKDAESAKKLIEDAKKCEEAGAIALVLECVPMQLAELISEQLTIPTIGIGAGQKVDGQVLVYHDLISYGVNRVPKFVKQYTSVQEEIVRGISQYVAEVKTRQFPEEKHSFTMKEEECLALYGGKQS</sequence>
<evidence type="ECO:0000255" key="1">
    <source>
        <dbReference type="HAMAP-Rule" id="MF_00156"/>
    </source>
</evidence>
<name>PANB_BACAA</name>
<protein>
    <recommendedName>
        <fullName evidence="1">3-methyl-2-oxobutanoate hydroxymethyltransferase</fullName>
        <ecNumber evidence="1">2.1.2.11</ecNumber>
    </recommendedName>
    <alternativeName>
        <fullName evidence="1">Ketopantoate hydroxymethyltransferase</fullName>
        <shortName evidence="1">KPHMT</shortName>
    </alternativeName>
</protein>